<name>PUR5_ALCBS</name>
<comment type="catalytic activity">
    <reaction evidence="1">
        <text>2-formamido-N(1)-(5-O-phospho-beta-D-ribosyl)acetamidine + ATP = 5-amino-1-(5-phospho-beta-D-ribosyl)imidazole + ADP + phosphate + H(+)</text>
        <dbReference type="Rhea" id="RHEA:23032"/>
        <dbReference type="ChEBI" id="CHEBI:15378"/>
        <dbReference type="ChEBI" id="CHEBI:30616"/>
        <dbReference type="ChEBI" id="CHEBI:43474"/>
        <dbReference type="ChEBI" id="CHEBI:137981"/>
        <dbReference type="ChEBI" id="CHEBI:147287"/>
        <dbReference type="ChEBI" id="CHEBI:456216"/>
        <dbReference type="EC" id="6.3.3.1"/>
    </reaction>
</comment>
<comment type="pathway">
    <text evidence="1">Purine metabolism; IMP biosynthesis via de novo pathway; 5-amino-1-(5-phospho-D-ribosyl)imidazole from N(2)-formyl-N(1)-(5-phospho-D-ribosyl)glycinamide: step 2/2.</text>
</comment>
<comment type="subcellular location">
    <subcellularLocation>
        <location evidence="1">Cytoplasm</location>
    </subcellularLocation>
</comment>
<comment type="similarity">
    <text evidence="1">Belongs to the AIR synthase family.</text>
</comment>
<accession>Q0VP77</accession>
<gene>
    <name evidence="1" type="primary">purM</name>
    <name type="ordered locus">ABO_1573</name>
</gene>
<sequence length="347" mass="36921">MTEQKRPLTYRDAGVDIDAGNELVKRIAPVAKRTRRPEVLGGLGGFGALCELPTKYKNPVLVAGTDGVGTKLRLAIDHNRHEKVGVDLVAMCVNDLIVGGAEPLFFLDYYATGKLDVEIATSVVTGIGEGCELAGCALIGGETAEMPGMYEGEDYDLAGFCVGVVEKDGVLDGSKVEAGDKLIGLGASGPHSNGYSLIRRIMAQAETDIDLDGKPLIEHLLEPTRIYVKSLLKLIEQVPVHAMAHITGGGLPENLPRVLPDNTRAVIDTKSWEFPAVFQWLQQEGQVPAFEMYRTFNCGVGMVIAVPASHVDDALALLEAEGESAFLIGEIQAGDGQPDVVLDGLSA</sequence>
<keyword id="KW-0067">ATP-binding</keyword>
<keyword id="KW-0963">Cytoplasm</keyword>
<keyword id="KW-0436">Ligase</keyword>
<keyword id="KW-0547">Nucleotide-binding</keyword>
<keyword id="KW-0658">Purine biosynthesis</keyword>
<keyword id="KW-1185">Reference proteome</keyword>
<protein>
    <recommendedName>
        <fullName evidence="1">Phosphoribosylformylglycinamidine cyclo-ligase</fullName>
        <ecNumber evidence="1">6.3.3.1</ecNumber>
    </recommendedName>
    <alternativeName>
        <fullName evidence="1">AIR synthase</fullName>
    </alternativeName>
    <alternativeName>
        <fullName evidence="1">AIRS</fullName>
    </alternativeName>
    <alternativeName>
        <fullName evidence="1">Phosphoribosyl-aminoimidazole synthetase</fullName>
    </alternativeName>
</protein>
<dbReference type="EC" id="6.3.3.1" evidence="1"/>
<dbReference type="EMBL" id="AM286690">
    <property type="protein sequence ID" value="CAL17021.1"/>
    <property type="molecule type" value="Genomic_DNA"/>
</dbReference>
<dbReference type="RefSeq" id="WP_011588854.1">
    <property type="nucleotide sequence ID" value="NC_008260.1"/>
</dbReference>
<dbReference type="SMR" id="Q0VP77"/>
<dbReference type="STRING" id="393595.ABO_1573"/>
<dbReference type="KEGG" id="abo:ABO_1573"/>
<dbReference type="eggNOG" id="COG0150">
    <property type="taxonomic scope" value="Bacteria"/>
</dbReference>
<dbReference type="HOGENOM" id="CLU_047116_0_0_6"/>
<dbReference type="OrthoDB" id="9777881at2"/>
<dbReference type="UniPathway" id="UPA00074">
    <property type="reaction ID" value="UER00129"/>
</dbReference>
<dbReference type="Proteomes" id="UP000008871">
    <property type="component" value="Chromosome"/>
</dbReference>
<dbReference type="GO" id="GO:0005829">
    <property type="term" value="C:cytosol"/>
    <property type="evidence" value="ECO:0007669"/>
    <property type="project" value="TreeGrafter"/>
</dbReference>
<dbReference type="GO" id="GO:0005524">
    <property type="term" value="F:ATP binding"/>
    <property type="evidence" value="ECO:0007669"/>
    <property type="project" value="UniProtKB-KW"/>
</dbReference>
<dbReference type="GO" id="GO:0004637">
    <property type="term" value="F:phosphoribosylamine-glycine ligase activity"/>
    <property type="evidence" value="ECO:0007669"/>
    <property type="project" value="TreeGrafter"/>
</dbReference>
<dbReference type="GO" id="GO:0004641">
    <property type="term" value="F:phosphoribosylformylglycinamidine cyclo-ligase activity"/>
    <property type="evidence" value="ECO:0007669"/>
    <property type="project" value="UniProtKB-UniRule"/>
</dbReference>
<dbReference type="GO" id="GO:0006189">
    <property type="term" value="P:'de novo' IMP biosynthetic process"/>
    <property type="evidence" value="ECO:0007669"/>
    <property type="project" value="UniProtKB-UniRule"/>
</dbReference>
<dbReference type="GO" id="GO:0046084">
    <property type="term" value="P:adenine biosynthetic process"/>
    <property type="evidence" value="ECO:0007669"/>
    <property type="project" value="TreeGrafter"/>
</dbReference>
<dbReference type="CDD" id="cd02196">
    <property type="entry name" value="PurM"/>
    <property type="match status" value="1"/>
</dbReference>
<dbReference type="FunFam" id="3.30.1330.10:FF:000001">
    <property type="entry name" value="Phosphoribosylformylglycinamidine cyclo-ligase"/>
    <property type="match status" value="1"/>
</dbReference>
<dbReference type="FunFam" id="3.90.650.10:FF:000001">
    <property type="entry name" value="Phosphoribosylformylglycinamidine cyclo-ligase"/>
    <property type="match status" value="1"/>
</dbReference>
<dbReference type="Gene3D" id="3.90.650.10">
    <property type="entry name" value="PurM-like C-terminal domain"/>
    <property type="match status" value="1"/>
</dbReference>
<dbReference type="Gene3D" id="3.30.1330.10">
    <property type="entry name" value="PurM-like, N-terminal domain"/>
    <property type="match status" value="1"/>
</dbReference>
<dbReference type="HAMAP" id="MF_00741">
    <property type="entry name" value="AIRS"/>
    <property type="match status" value="1"/>
</dbReference>
<dbReference type="InterPro" id="IPR010918">
    <property type="entry name" value="PurM-like_C_dom"/>
</dbReference>
<dbReference type="InterPro" id="IPR036676">
    <property type="entry name" value="PurM-like_C_sf"/>
</dbReference>
<dbReference type="InterPro" id="IPR016188">
    <property type="entry name" value="PurM-like_N"/>
</dbReference>
<dbReference type="InterPro" id="IPR036921">
    <property type="entry name" value="PurM-like_N_sf"/>
</dbReference>
<dbReference type="InterPro" id="IPR004733">
    <property type="entry name" value="PurM_cligase"/>
</dbReference>
<dbReference type="NCBIfam" id="TIGR00878">
    <property type="entry name" value="purM"/>
    <property type="match status" value="1"/>
</dbReference>
<dbReference type="PANTHER" id="PTHR10520:SF12">
    <property type="entry name" value="TRIFUNCTIONAL PURINE BIOSYNTHETIC PROTEIN ADENOSINE-3"/>
    <property type="match status" value="1"/>
</dbReference>
<dbReference type="PANTHER" id="PTHR10520">
    <property type="entry name" value="TRIFUNCTIONAL PURINE BIOSYNTHETIC PROTEIN ADENOSINE-3-RELATED"/>
    <property type="match status" value="1"/>
</dbReference>
<dbReference type="Pfam" id="PF00586">
    <property type="entry name" value="AIRS"/>
    <property type="match status" value="1"/>
</dbReference>
<dbReference type="Pfam" id="PF02769">
    <property type="entry name" value="AIRS_C"/>
    <property type="match status" value="1"/>
</dbReference>
<dbReference type="SUPFAM" id="SSF56042">
    <property type="entry name" value="PurM C-terminal domain-like"/>
    <property type="match status" value="1"/>
</dbReference>
<dbReference type="SUPFAM" id="SSF55326">
    <property type="entry name" value="PurM N-terminal domain-like"/>
    <property type="match status" value="1"/>
</dbReference>
<proteinExistence type="inferred from homology"/>
<feature type="chain" id="PRO_0000258325" description="Phosphoribosylformylglycinamidine cyclo-ligase">
    <location>
        <begin position="1"/>
        <end position="347"/>
    </location>
</feature>
<organism>
    <name type="scientific">Alcanivorax borkumensis (strain ATCC 700651 / DSM 11573 / NCIMB 13689 / SK2)</name>
    <dbReference type="NCBI Taxonomy" id="393595"/>
    <lineage>
        <taxon>Bacteria</taxon>
        <taxon>Pseudomonadati</taxon>
        <taxon>Pseudomonadota</taxon>
        <taxon>Gammaproteobacteria</taxon>
        <taxon>Oceanospirillales</taxon>
        <taxon>Alcanivoracaceae</taxon>
        <taxon>Alcanivorax</taxon>
    </lineage>
</organism>
<reference key="1">
    <citation type="journal article" date="2006" name="Nat. Biotechnol.">
        <title>Genome sequence of the ubiquitous hydrocarbon-degrading marine bacterium Alcanivorax borkumensis.</title>
        <authorList>
            <person name="Schneiker S."/>
            <person name="Martins dos Santos V.A.P."/>
            <person name="Bartels D."/>
            <person name="Bekel T."/>
            <person name="Brecht M."/>
            <person name="Buhrmester J."/>
            <person name="Chernikova T.N."/>
            <person name="Denaro R."/>
            <person name="Ferrer M."/>
            <person name="Gertler C."/>
            <person name="Goesmann A."/>
            <person name="Golyshina O.V."/>
            <person name="Kaminski F."/>
            <person name="Khachane A.N."/>
            <person name="Lang S."/>
            <person name="Linke B."/>
            <person name="McHardy A.C."/>
            <person name="Meyer F."/>
            <person name="Nechitaylo T."/>
            <person name="Puehler A."/>
            <person name="Regenhardt D."/>
            <person name="Rupp O."/>
            <person name="Sabirova J.S."/>
            <person name="Selbitschka W."/>
            <person name="Yakimov M.M."/>
            <person name="Timmis K.N."/>
            <person name="Vorhoelter F.-J."/>
            <person name="Weidner S."/>
            <person name="Kaiser O."/>
            <person name="Golyshin P.N."/>
        </authorList>
    </citation>
    <scope>NUCLEOTIDE SEQUENCE [LARGE SCALE GENOMIC DNA]</scope>
    <source>
        <strain>ATCC 700651 / DSM 11573 / NCIMB 13689 / SK2</strain>
    </source>
</reference>
<evidence type="ECO:0000255" key="1">
    <source>
        <dbReference type="HAMAP-Rule" id="MF_00741"/>
    </source>
</evidence>